<proteinExistence type="inferred from homology"/>
<accession>P34699</accession>
<accession>A4FLS4</accession>
<gene>
    <name type="primary">dnaE</name>
    <name type="synonym">polC</name>
    <name type="ordered locus">SACE_5815</name>
</gene>
<protein>
    <recommendedName>
        <fullName>DNA polymerase III subunit alpha</fullName>
        <ecNumber>2.7.7.7</ecNumber>
    </recommendedName>
</protein>
<comment type="function">
    <text evidence="1">DNA polymerase III is a complex, multichain enzyme responsible for most of the replicative synthesis in bacteria. This DNA polymerase also exhibits 3' to 5' exonuclease activity. The alpha chain is the DNA polymerase (By similarity).</text>
</comment>
<comment type="catalytic activity">
    <reaction>
        <text>DNA(n) + a 2'-deoxyribonucleoside 5'-triphosphate = DNA(n+1) + diphosphate</text>
        <dbReference type="Rhea" id="RHEA:22508"/>
        <dbReference type="Rhea" id="RHEA-COMP:17339"/>
        <dbReference type="Rhea" id="RHEA-COMP:17340"/>
        <dbReference type="ChEBI" id="CHEBI:33019"/>
        <dbReference type="ChEBI" id="CHEBI:61560"/>
        <dbReference type="ChEBI" id="CHEBI:173112"/>
        <dbReference type="EC" id="2.7.7.7"/>
    </reaction>
</comment>
<comment type="subunit">
    <text evidence="1">DNA polymerase III contains a core (composed of alpha, epsilon and theta chains) that associates with a tau subunit. This core dimerizes to form the PolIII' complex. PolIII' associates with the gamma complex (composed of gamma, delta, delta', psi and chi chains) and with the beta chain to form the complete DNA polymerase III complex (By similarity).</text>
</comment>
<comment type="subcellular location">
    <subcellularLocation>
        <location evidence="1">Cytoplasm</location>
    </subcellularLocation>
</comment>
<comment type="similarity">
    <text evidence="2">Belongs to the DNA polymerase type-C family. DnaE subfamily.</text>
</comment>
<sequence>MPVDPFVHLHVHTEYSMLDGAAKVGALFAEAQRLEMPAVGMTDHGNMFGADEFYQQAKKTGIKPIIGIEAYLAPGSRFHKKPVFWGEAKQRGTDEYGEGGDVSGAGAYTHMTMLARNATGLRNLFTLSSRASMEGQYRKPRMDRELVAEYAEGIIATTGCPSGEVQTRLRLRQFDEAMQAASDYKDIFGAENFFLELMDHGLPIERSVREGLLKIAKELGLKPVATNDSHYVTADQAESHGALLCVQSGKTLNDESRFKFDGDGYYLKSAAEMREYWDKEVPGAADNTLLIAERVESYEDVWSFQDRMPRVTDGSGKTERQLLEAEVEQYLPTRYPEGATQECLDRIKVELDVLDTKGYCAYFLVVGDLTRWAKSQGIHVGPGRGSAAGSLLAYILHITNLDPLEHGLIFERFLNPERDSPPDIDLDFDDRRRDEVLQYAIDKYGRDKVAQVITFGKIKTKAAIKDSARVHHGQPGFAIADKISKALPPPIAAKDIPLSGIVDPQHERYAEAAEVRNLIETDPSVSQIFDTARGLEGLIRNAGVHACAVILSSQPLMGTVPLWARDDGSIITGWDYPSCEAIGLLKMDFLGLSNLTILGDALKMVKANHDREIDLSNLGLDDAKTYELLARGESLGVFQLEGGGMRELLKRMQPTEFADIVACNALYRPGPMEVNAHNDYADRKNGKKPVEPIHPDLDEPLKDILSETYGLIVYQEQIMAIAQKVAGYSLGRADILRRAMGKKKKEVLDQEFEGFQAGMREQGFRDEAIDKLWATVLPFAGYAFNKSHAAGYALVAYWTAYLKANYPAEYMAALLTSNGDNKDKMAVYLAECRRMGVKVLSPDVNDSLNDFTAVGSDIRFGLSAVRNVGSNVVASIAKVREDKGRYSSFTDFLDKSETVACNKRVIESLIKAGAFDSLGHTRMSLAQHHEAAVDAVIGLKRQQALGQFDLFGGGDDAGGEESSSPLAHLQFTPDEWPRKQMLSYEREMLGLYVSAHPLDGAERLLAPYQDTGIAELVGGEREAGKDQVKIAGMISGIQRRINKNGHPWAIVTLEDLDASVEVLFFPKSYEMFADCLVEDTAIAVKGRINEREGTISIFASDAVPVDISAAETDPGTSPAFVIKVPASRVDRSLVAELKRTLQAHSGTVPVHVKLQGPRGVTRLALSSDYFVSTENGLQGELKGLLGAGCFETVL</sequence>
<feature type="chain" id="PRO_0000103337" description="DNA polymerase III subunit alpha">
    <location>
        <begin position="1"/>
        <end position="1194"/>
    </location>
</feature>
<feature type="DNA-binding region" description="OB">
    <location>
        <begin position="1028"/>
        <end position="1102"/>
    </location>
</feature>
<feature type="sequence conflict" description="In Ref. 2; M83110." evidence="2" ref="2">
    <original>A</original>
    <variation>R</variation>
    <location>
        <position position="931"/>
    </location>
</feature>
<feature type="sequence conflict" description="In Ref. 2; M83110." evidence="2" ref="2">
    <original>V</original>
    <variation>L</variation>
    <location>
        <position position="1077"/>
    </location>
</feature>
<evidence type="ECO:0000250" key="1"/>
<evidence type="ECO:0000305" key="2"/>
<dbReference type="EC" id="2.7.7.7"/>
<dbReference type="EMBL" id="AM420293">
    <property type="protein sequence ID" value="CAM04999.1"/>
    <property type="molecule type" value="Genomic_DNA"/>
</dbReference>
<dbReference type="EMBL" id="M83110">
    <property type="status" value="NOT_ANNOTATED_CDS"/>
    <property type="molecule type" value="Genomic_DNA"/>
</dbReference>
<dbReference type="PIR" id="A42606">
    <property type="entry name" value="A42606"/>
</dbReference>
<dbReference type="RefSeq" id="WP_009943181.1">
    <property type="nucleotide sequence ID" value="NC_009142.1"/>
</dbReference>
<dbReference type="SMR" id="P34699"/>
<dbReference type="STRING" id="405948.SACE_5815"/>
<dbReference type="KEGG" id="sen:SACE_5815"/>
<dbReference type="eggNOG" id="COG0587">
    <property type="taxonomic scope" value="Bacteria"/>
</dbReference>
<dbReference type="HOGENOM" id="CLU_001600_0_0_11"/>
<dbReference type="OrthoDB" id="9803237at2"/>
<dbReference type="Proteomes" id="UP000006728">
    <property type="component" value="Chromosome"/>
</dbReference>
<dbReference type="GO" id="GO:0005737">
    <property type="term" value="C:cytoplasm"/>
    <property type="evidence" value="ECO:0007669"/>
    <property type="project" value="UniProtKB-SubCell"/>
</dbReference>
<dbReference type="GO" id="GO:0008408">
    <property type="term" value="F:3'-5' exonuclease activity"/>
    <property type="evidence" value="ECO:0007669"/>
    <property type="project" value="InterPro"/>
</dbReference>
<dbReference type="GO" id="GO:0003887">
    <property type="term" value="F:DNA-directed DNA polymerase activity"/>
    <property type="evidence" value="ECO:0007669"/>
    <property type="project" value="UniProtKB-KW"/>
</dbReference>
<dbReference type="GO" id="GO:0003676">
    <property type="term" value="F:nucleic acid binding"/>
    <property type="evidence" value="ECO:0007669"/>
    <property type="project" value="InterPro"/>
</dbReference>
<dbReference type="GO" id="GO:0006260">
    <property type="term" value="P:DNA replication"/>
    <property type="evidence" value="ECO:0007669"/>
    <property type="project" value="UniProtKB-KW"/>
</dbReference>
<dbReference type="CDD" id="cd04485">
    <property type="entry name" value="DnaE_OBF"/>
    <property type="match status" value="1"/>
</dbReference>
<dbReference type="CDD" id="cd12113">
    <property type="entry name" value="PHP_PolIIIA_DnaE3"/>
    <property type="match status" value="1"/>
</dbReference>
<dbReference type="Gene3D" id="1.10.150.870">
    <property type="match status" value="1"/>
</dbReference>
<dbReference type="Gene3D" id="1.10.10.1600">
    <property type="entry name" value="Bacterial DNA polymerase III alpha subunit, thumb domain"/>
    <property type="match status" value="1"/>
</dbReference>
<dbReference type="Gene3D" id="3.20.20.140">
    <property type="entry name" value="Metal-dependent hydrolases"/>
    <property type="match status" value="1"/>
</dbReference>
<dbReference type="InterPro" id="IPR011708">
    <property type="entry name" value="DNA_pol3_alpha_NTPase_dom"/>
</dbReference>
<dbReference type="InterPro" id="IPR041931">
    <property type="entry name" value="DNA_pol3_alpha_thumb_dom"/>
</dbReference>
<dbReference type="InterPro" id="IPR040982">
    <property type="entry name" value="DNA_pol3_finger"/>
</dbReference>
<dbReference type="InterPro" id="IPR004805">
    <property type="entry name" value="DnaE2/DnaE/PolC"/>
</dbReference>
<dbReference type="InterPro" id="IPR029460">
    <property type="entry name" value="DNAPol_HHH"/>
</dbReference>
<dbReference type="InterPro" id="IPR004365">
    <property type="entry name" value="NA-bd_OB_tRNA"/>
</dbReference>
<dbReference type="InterPro" id="IPR004013">
    <property type="entry name" value="PHP_dom"/>
</dbReference>
<dbReference type="InterPro" id="IPR003141">
    <property type="entry name" value="Pol/His_phosphatase_N"/>
</dbReference>
<dbReference type="InterPro" id="IPR016195">
    <property type="entry name" value="Pol/histidinol_Pase-like"/>
</dbReference>
<dbReference type="NCBIfam" id="TIGR00594">
    <property type="entry name" value="polc"/>
    <property type="match status" value="1"/>
</dbReference>
<dbReference type="NCBIfam" id="NF004226">
    <property type="entry name" value="PRK05673.1"/>
    <property type="match status" value="1"/>
</dbReference>
<dbReference type="PANTHER" id="PTHR32294">
    <property type="entry name" value="DNA POLYMERASE III SUBUNIT ALPHA"/>
    <property type="match status" value="1"/>
</dbReference>
<dbReference type="PANTHER" id="PTHR32294:SF0">
    <property type="entry name" value="DNA POLYMERASE III SUBUNIT ALPHA"/>
    <property type="match status" value="1"/>
</dbReference>
<dbReference type="Pfam" id="PF07733">
    <property type="entry name" value="DNA_pol3_alpha"/>
    <property type="match status" value="1"/>
</dbReference>
<dbReference type="Pfam" id="PF17657">
    <property type="entry name" value="DNA_pol3_finger"/>
    <property type="match status" value="1"/>
</dbReference>
<dbReference type="Pfam" id="PF14579">
    <property type="entry name" value="HHH_6"/>
    <property type="match status" value="1"/>
</dbReference>
<dbReference type="Pfam" id="PF02811">
    <property type="entry name" value="PHP"/>
    <property type="match status" value="1"/>
</dbReference>
<dbReference type="Pfam" id="PF01336">
    <property type="entry name" value="tRNA_anti-codon"/>
    <property type="match status" value="1"/>
</dbReference>
<dbReference type="SMART" id="SM00481">
    <property type="entry name" value="POLIIIAc"/>
    <property type="match status" value="1"/>
</dbReference>
<dbReference type="SUPFAM" id="SSF89550">
    <property type="entry name" value="PHP domain-like"/>
    <property type="match status" value="1"/>
</dbReference>
<organism>
    <name type="scientific">Saccharopolyspora erythraea (strain ATCC 11635 / DSM 40517 / JCM 4748 / NBRC 13426 / NCIMB 8594 / NRRL 2338)</name>
    <dbReference type="NCBI Taxonomy" id="405948"/>
    <lineage>
        <taxon>Bacteria</taxon>
        <taxon>Bacillati</taxon>
        <taxon>Actinomycetota</taxon>
        <taxon>Actinomycetes</taxon>
        <taxon>Pseudonocardiales</taxon>
        <taxon>Pseudonocardiaceae</taxon>
        <taxon>Saccharopolyspora</taxon>
    </lineage>
</organism>
<reference key="1">
    <citation type="journal article" date="2007" name="Nat. Biotechnol.">
        <title>Complete genome sequence of the erythromycin-producing bacterium Saccharopolyspora erythraea NRRL23338.</title>
        <authorList>
            <person name="Oliynyk M."/>
            <person name="Samborskyy M."/>
            <person name="Lester J.B."/>
            <person name="Mironenko T."/>
            <person name="Scott N."/>
            <person name="Dickens S."/>
            <person name="Haydock S.F."/>
            <person name="Leadlay P.F."/>
        </authorList>
    </citation>
    <scope>NUCLEOTIDE SEQUENCE [LARGE SCALE GENOMIC DNA]</scope>
    <source>
        <strain>ATCC 11635 / DSM 40517 / JCM 4748 / NBRC 13426 / NCIMB 8594 / NRRL 2338</strain>
    </source>
</reference>
<reference key="2">
    <citation type="journal article" date="1992" name="J. Bacteriol.">
        <title>Characterization of Saccharopolyspora erythraea cytochrome P-450 genes and enzymes, including 6-deoxyerythronolide B hydroxylase.</title>
        <authorList>
            <person name="Andersen J.F."/>
            <person name="Hutchinson C.R."/>
        </authorList>
    </citation>
    <scope>NUCLEOTIDE SEQUENCE [GENOMIC DNA] OF 931-1194</scope>
    <source>
        <strain>ATCC 11635 / DSM 40517 / JCM 4748 / NBRC 13426 / NCIMB 8594 / NRRL 2338</strain>
    </source>
</reference>
<name>DPO3A_SACEN</name>
<keyword id="KW-0963">Cytoplasm</keyword>
<keyword id="KW-0235">DNA replication</keyword>
<keyword id="KW-0239">DNA-directed DNA polymerase</keyword>
<keyword id="KW-0548">Nucleotidyltransferase</keyword>
<keyword id="KW-1185">Reference proteome</keyword>
<keyword id="KW-0808">Transferase</keyword>